<organism>
    <name type="scientific">Schizosaccharomyces pombe (strain 972 / ATCC 24843)</name>
    <name type="common">Fission yeast</name>
    <dbReference type="NCBI Taxonomy" id="284812"/>
    <lineage>
        <taxon>Eukaryota</taxon>
        <taxon>Fungi</taxon>
        <taxon>Dikarya</taxon>
        <taxon>Ascomycota</taxon>
        <taxon>Taphrinomycotina</taxon>
        <taxon>Schizosaccharomycetes</taxon>
        <taxon>Schizosaccharomycetales</taxon>
        <taxon>Schizosaccharomycetaceae</taxon>
        <taxon>Schizosaccharomyces</taxon>
    </lineage>
</organism>
<protein>
    <recommendedName>
        <fullName evidence="1">Probable intron-encoded endonuclease Cox1-I1b</fullName>
        <ecNumber evidence="1">3.1.-.-</ecNumber>
    </recommendedName>
</protein>
<feature type="chain" id="PRO_0000196884" description="Probable intron-encoded endonuclease Cox1-I1b">
    <location>
        <begin position="1"/>
        <end position="384"/>
    </location>
</feature>
<geneLocation type="mitochondrion"/>
<comment type="function">
    <text evidence="1">Probable mitochondrial DNA endonuclease involved in intron homing.</text>
</comment>
<comment type="subcellular location">
    <subcellularLocation>
        <location evidence="1">Mitochondrion</location>
    </subcellularLocation>
</comment>
<comment type="miscellaneous">
    <text evidence="1">This protein is coded in group-I intron 1 of cox1.</text>
</comment>
<comment type="similarity">
    <text evidence="1">Belongs to the LAGLIDADG endonuclease family.</text>
</comment>
<name>COX1B_SCHPO</name>
<sequence length="384" mass="45637">MKPQTKLSENSSRCEKVLYSEVITQLIYFLTSKKITNLGKIRLVKSIRDSFLSQLENILCFFLVYRTTYSFGVCLMKRFLFNKFFNRHPFTRVKSCFSSSSPSKFSFTQWLVGFTDGDGCFSISKQKIKNGKNKWSLTFKLTQNLYNYRILYFIKRNLGIGSLYKESSTNTVIYRLRRREHLKKIIDIFDQFPLLTKKYWDYYLFKKAFLILEDANLNSFEKNSKLEEIRIEKKSLKQYSPVNLEKYLTKSWLIGFIEAEGSFYLLQKSPVRIIHGFEITQNYEQPLLAQISEFLFNSQISPKIKSKKNSLITNYSLSTSSKERMLFLSSYFENCFKGVKSLEFKIWSRSLRKNYNFEQLLRARDLIRKLKNKYSRGSQHPKDK</sequence>
<proteinExistence type="inferred from homology"/>
<accession>P22191</accession>
<reference key="1">
    <citation type="book" date="1993" name="Genetic Maps (6th edition)">
        <title>The mitochondrial genome of Schizosaccharomyces pombe.</title>
        <editorList>
            <person name="O'Brien S.J."/>
        </editorList>
        <authorList>
            <person name="Lang B.F."/>
        </authorList>
    </citation>
    <scope>NUCLEOTIDE SEQUENCE [LARGE SCALE GENOMIC DNA]</scope>
    <source>
        <strain>AD7-50</strain>
    </source>
</reference>
<evidence type="ECO:0000305" key="1"/>
<keyword id="KW-0255">Endonuclease</keyword>
<keyword id="KW-0378">Hydrolase</keyword>
<keyword id="KW-0404">Intron homing</keyword>
<keyword id="KW-0496">Mitochondrion</keyword>
<keyword id="KW-0540">Nuclease</keyword>
<keyword id="KW-1185">Reference proteome</keyword>
<dbReference type="EC" id="3.1.-.-" evidence="1"/>
<dbReference type="EMBL" id="X54421">
    <property type="protein sequence ID" value="CAA38285.1"/>
    <property type="molecule type" value="Genomic_DNA"/>
</dbReference>
<dbReference type="RefSeq" id="NP_112417.1">
    <property type="nucleotide sequence ID" value="NC_001326.1"/>
</dbReference>
<dbReference type="SMR" id="P22191"/>
<dbReference type="STRING" id="284812.P22191"/>
<dbReference type="iPTMnet" id="P22191"/>
<dbReference type="PaxDb" id="4896-SPMIT.02.1"/>
<dbReference type="PomBase" id="SPMIT.02">
    <property type="gene designation" value="cox1-I1b"/>
</dbReference>
<dbReference type="eggNOG" id="ENOG502S2UT">
    <property type="taxonomic scope" value="Eukaryota"/>
</dbReference>
<dbReference type="HOGENOM" id="CLU_054501_0_0_1"/>
<dbReference type="InParanoid" id="P22191"/>
<dbReference type="PhylomeDB" id="P22191"/>
<dbReference type="PRO" id="PR:P22191"/>
<dbReference type="Proteomes" id="UP000002485">
    <property type="component" value="Mitochondrion"/>
</dbReference>
<dbReference type="GO" id="GO:0000262">
    <property type="term" value="C:mitochondrial chromosome"/>
    <property type="evidence" value="ECO:0000305"/>
    <property type="project" value="PomBase"/>
</dbReference>
<dbReference type="GO" id="GO:0003677">
    <property type="term" value="F:DNA binding"/>
    <property type="evidence" value="ECO:0000255"/>
    <property type="project" value="PomBase"/>
</dbReference>
<dbReference type="GO" id="GO:0004519">
    <property type="term" value="F:endonuclease activity"/>
    <property type="evidence" value="ECO:0000255"/>
    <property type="project" value="PomBase"/>
</dbReference>
<dbReference type="GO" id="GO:0006314">
    <property type="term" value="P:intron homing"/>
    <property type="evidence" value="ECO:0000255"/>
    <property type="project" value="PomBase"/>
</dbReference>
<dbReference type="FunFam" id="3.10.28.10:FF:000033">
    <property type="entry name" value="Probable intron-encoded endonuclease aI2"/>
    <property type="match status" value="1"/>
</dbReference>
<dbReference type="Gene3D" id="3.10.28.10">
    <property type="entry name" value="Homing endonucleases"/>
    <property type="match status" value="2"/>
</dbReference>
<dbReference type="InterPro" id="IPR027434">
    <property type="entry name" value="Homing_endonucl"/>
</dbReference>
<dbReference type="InterPro" id="IPR004860">
    <property type="entry name" value="LAGLIDADG_dom"/>
</dbReference>
<dbReference type="InterPro" id="IPR051289">
    <property type="entry name" value="LAGLIDADG_Endonuclease"/>
</dbReference>
<dbReference type="PANTHER" id="PTHR36181">
    <property type="entry name" value="INTRON-ENCODED ENDONUCLEASE AI3-RELATED"/>
    <property type="match status" value="1"/>
</dbReference>
<dbReference type="PANTHER" id="PTHR36181:SF2">
    <property type="entry name" value="INTRON-ENCODED ENDONUCLEASE AI3-RELATED"/>
    <property type="match status" value="1"/>
</dbReference>
<dbReference type="Pfam" id="PF00961">
    <property type="entry name" value="LAGLIDADG_1"/>
    <property type="match status" value="2"/>
</dbReference>
<dbReference type="SUPFAM" id="SSF55608">
    <property type="entry name" value="Homing endonucleases"/>
    <property type="match status" value="2"/>
</dbReference>
<gene>
    <name type="primary">cox1-I1b</name>
    <name type="ORF">SPMIT.02</name>
</gene>